<comment type="function">
    <text evidence="1">Required for the post-translational delivery of tail-anchored (TA) proteins to the endoplasmic reticulum. Together with GET1, acts as a membrane receptor for soluble GET3, which recognizes and selectively binds the transmembrane domain of TA proteins in the cytosol. The GET complex cooperates with the HDEL receptor ERD2 to mediate the ATP-dependent retrieval of resident ER proteins that contain a C-terminal H-D-E-L retention signal from the Golgi to the ER.</text>
</comment>
<comment type="subunit">
    <text evidence="1">Component of the Golgi to ER traffic (GET) complex, which is composed of GET1, GET2 and GET3. Within the complex, GET1 and GET2 form a heterotetramer which is stabilized by phosphatidylinositol binding and which binds to the GET3 homodimer.</text>
</comment>
<comment type="subcellular location">
    <subcellularLocation>
        <location evidence="1">Endoplasmic reticulum membrane</location>
        <topology evidence="1">Multi-pass membrane protein</topology>
    </subcellularLocation>
    <subcellularLocation>
        <location evidence="1">Golgi apparatus membrane</location>
        <topology evidence="1">Multi-pass membrane protein</topology>
    </subcellularLocation>
</comment>
<comment type="similarity">
    <text evidence="1">Belongs to the GET2 family.</text>
</comment>
<proteinExistence type="inferred from homology"/>
<dbReference type="EMBL" id="CR382123">
    <property type="protein sequence ID" value="CAH01460.1"/>
    <property type="molecule type" value="Genomic_DNA"/>
</dbReference>
<dbReference type="RefSeq" id="XP_452609.1">
    <property type="nucleotide sequence ID" value="XM_452609.1"/>
</dbReference>
<dbReference type="FunCoup" id="Q6CTY0">
    <property type="interactions" value="71"/>
</dbReference>
<dbReference type="STRING" id="284590.Q6CTY0"/>
<dbReference type="PaxDb" id="284590-Q6CTY0"/>
<dbReference type="KEGG" id="kla:KLLA0_C09196g"/>
<dbReference type="eggNOG" id="ENOG502QW0H">
    <property type="taxonomic scope" value="Eukaryota"/>
</dbReference>
<dbReference type="HOGENOM" id="CLU_066477_0_0_1"/>
<dbReference type="InParanoid" id="Q6CTY0"/>
<dbReference type="OMA" id="QYWDVLS"/>
<dbReference type="Proteomes" id="UP000000598">
    <property type="component" value="Chromosome C"/>
</dbReference>
<dbReference type="GO" id="GO:0005789">
    <property type="term" value="C:endoplasmic reticulum membrane"/>
    <property type="evidence" value="ECO:0007669"/>
    <property type="project" value="UniProtKB-SubCell"/>
</dbReference>
<dbReference type="GO" id="GO:0043529">
    <property type="term" value="C:GET complex"/>
    <property type="evidence" value="ECO:0007669"/>
    <property type="project" value="UniProtKB-UniRule"/>
</dbReference>
<dbReference type="GO" id="GO:0000139">
    <property type="term" value="C:Golgi membrane"/>
    <property type="evidence" value="ECO:0007669"/>
    <property type="project" value="UniProtKB-SubCell"/>
</dbReference>
<dbReference type="GO" id="GO:0045048">
    <property type="term" value="P:protein insertion into ER membrane"/>
    <property type="evidence" value="ECO:0007669"/>
    <property type="project" value="UniProtKB-UniRule"/>
</dbReference>
<dbReference type="GO" id="GO:0006890">
    <property type="term" value="P:retrograde vesicle-mediated transport, Golgi to endoplasmic reticulum"/>
    <property type="evidence" value="ECO:0007669"/>
    <property type="project" value="TreeGrafter"/>
</dbReference>
<dbReference type="HAMAP" id="MF_03114">
    <property type="entry name" value="Get2"/>
    <property type="match status" value="1"/>
</dbReference>
<dbReference type="InterPro" id="IPR014802">
    <property type="entry name" value="GET2"/>
</dbReference>
<dbReference type="InterPro" id="IPR028143">
    <property type="entry name" value="Get2/sif1"/>
</dbReference>
<dbReference type="PANTHER" id="PTHR28263">
    <property type="entry name" value="GOLGI TO ER TRAFFIC PROTEIN 2"/>
    <property type="match status" value="1"/>
</dbReference>
<dbReference type="PANTHER" id="PTHR28263:SF1">
    <property type="entry name" value="GOLGI TO ER TRAFFIC PROTEIN 2"/>
    <property type="match status" value="1"/>
</dbReference>
<dbReference type="Pfam" id="PF08690">
    <property type="entry name" value="GET2"/>
    <property type="match status" value="1"/>
</dbReference>
<protein>
    <recommendedName>
        <fullName evidence="1">Golgi to ER traffic protein 2</fullName>
    </recommendedName>
</protein>
<keyword id="KW-0256">Endoplasmic reticulum</keyword>
<keyword id="KW-0931">ER-Golgi transport</keyword>
<keyword id="KW-0333">Golgi apparatus</keyword>
<keyword id="KW-0472">Membrane</keyword>
<keyword id="KW-1185">Reference proteome</keyword>
<keyword id="KW-0812">Transmembrane</keyword>
<keyword id="KW-1133">Transmembrane helix</keyword>
<keyword id="KW-0813">Transport</keyword>
<gene>
    <name evidence="1" type="primary">GET2</name>
    <name type="ordered locus">KLLA0C09196g</name>
</gene>
<organism>
    <name type="scientific">Kluyveromyces lactis (strain ATCC 8585 / CBS 2359 / DSM 70799 / NBRC 1267 / NRRL Y-1140 / WM37)</name>
    <name type="common">Yeast</name>
    <name type="synonym">Candida sphaerica</name>
    <dbReference type="NCBI Taxonomy" id="284590"/>
    <lineage>
        <taxon>Eukaryota</taxon>
        <taxon>Fungi</taxon>
        <taxon>Dikarya</taxon>
        <taxon>Ascomycota</taxon>
        <taxon>Saccharomycotina</taxon>
        <taxon>Saccharomycetes</taxon>
        <taxon>Saccharomycetales</taxon>
        <taxon>Saccharomycetaceae</taxon>
        <taxon>Kluyveromyces</taxon>
    </lineage>
</organism>
<accession>Q6CTY0</accession>
<sequence length="316" mass="35236">MATELSDAEKRKLLRERRQQKFSNGGASSRLNKITGQQQNSFLSSTSVLDEPKVTPSGNKKSSNVSDEEVEKSTKEIQDLLSSIPGNKDNSETDAAETNPEVALFQQLLKMQQQGGGFQNGSPDASTPDLFSSLLNNDTNTTASATQMLPNFVDEKVLKYYKFKVSKLKSYIILIKWALLAPYVYFIMHPNPTVLQASNLLSQIVERSNFFSIFTGLEIVFISIYYQMLKKLQRDNNVTATQNAGGILKYLTMIPEGILPIRNIQGKIGLALEYFDVASMYVTDICFVLVLFGVMKYYHSSFPISVPIEPPIAGIQ</sequence>
<evidence type="ECO:0000255" key="1">
    <source>
        <dbReference type="HAMAP-Rule" id="MF_03114"/>
    </source>
</evidence>
<evidence type="ECO:0000256" key="2">
    <source>
        <dbReference type="SAM" id="MobiDB-lite"/>
    </source>
</evidence>
<reference key="1">
    <citation type="journal article" date="2004" name="Nature">
        <title>Genome evolution in yeasts.</title>
        <authorList>
            <person name="Dujon B."/>
            <person name="Sherman D."/>
            <person name="Fischer G."/>
            <person name="Durrens P."/>
            <person name="Casaregola S."/>
            <person name="Lafontaine I."/>
            <person name="de Montigny J."/>
            <person name="Marck C."/>
            <person name="Neuveglise C."/>
            <person name="Talla E."/>
            <person name="Goffard N."/>
            <person name="Frangeul L."/>
            <person name="Aigle M."/>
            <person name="Anthouard V."/>
            <person name="Babour A."/>
            <person name="Barbe V."/>
            <person name="Barnay S."/>
            <person name="Blanchin S."/>
            <person name="Beckerich J.-M."/>
            <person name="Beyne E."/>
            <person name="Bleykasten C."/>
            <person name="Boisrame A."/>
            <person name="Boyer J."/>
            <person name="Cattolico L."/>
            <person name="Confanioleri F."/>
            <person name="de Daruvar A."/>
            <person name="Despons L."/>
            <person name="Fabre E."/>
            <person name="Fairhead C."/>
            <person name="Ferry-Dumazet H."/>
            <person name="Groppi A."/>
            <person name="Hantraye F."/>
            <person name="Hennequin C."/>
            <person name="Jauniaux N."/>
            <person name="Joyet P."/>
            <person name="Kachouri R."/>
            <person name="Kerrest A."/>
            <person name="Koszul R."/>
            <person name="Lemaire M."/>
            <person name="Lesur I."/>
            <person name="Ma L."/>
            <person name="Muller H."/>
            <person name="Nicaud J.-M."/>
            <person name="Nikolski M."/>
            <person name="Oztas S."/>
            <person name="Ozier-Kalogeropoulos O."/>
            <person name="Pellenz S."/>
            <person name="Potier S."/>
            <person name="Richard G.-F."/>
            <person name="Straub M.-L."/>
            <person name="Suleau A."/>
            <person name="Swennen D."/>
            <person name="Tekaia F."/>
            <person name="Wesolowski-Louvel M."/>
            <person name="Westhof E."/>
            <person name="Wirth B."/>
            <person name="Zeniou-Meyer M."/>
            <person name="Zivanovic Y."/>
            <person name="Bolotin-Fukuhara M."/>
            <person name="Thierry A."/>
            <person name="Bouchier C."/>
            <person name="Caudron B."/>
            <person name="Scarpelli C."/>
            <person name="Gaillardin C."/>
            <person name="Weissenbach J."/>
            <person name="Wincker P."/>
            <person name="Souciet J.-L."/>
        </authorList>
    </citation>
    <scope>NUCLEOTIDE SEQUENCE [LARGE SCALE GENOMIC DNA]</scope>
    <source>
        <strain>ATCC 8585 / CBS 2359 / DSM 70799 / NBRC 1267 / NRRL Y-1140 / WM37</strain>
    </source>
</reference>
<feature type="chain" id="PRO_0000388632" description="Golgi to ER traffic protein 2">
    <location>
        <begin position="1"/>
        <end position="316"/>
    </location>
</feature>
<feature type="topological domain" description="Cytoplasmic" evidence="1">
    <location>
        <begin position="1"/>
        <end position="167"/>
    </location>
</feature>
<feature type="transmembrane region" description="Helical" evidence="1">
    <location>
        <begin position="168"/>
        <end position="187"/>
    </location>
</feature>
<feature type="topological domain" description="Lumenal" evidence="1">
    <location>
        <begin position="188"/>
        <end position="209"/>
    </location>
</feature>
<feature type="transmembrane region" description="Helical" evidence="1">
    <location>
        <begin position="210"/>
        <end position="229"/>
    </location>
</feature>
<feature type="topological domain" description="Cytoplasmic" evidence="1">
    <location>
        <begin position="230"/>
        <end position="276"/>
    </location>
</feature>
<feature type="transmembrane region" description="Helical" evidence="1">
    <location>
        <begin position="277"/>
        <end position="297"/>
    </location>
</feature>
<feature type="topological domain" description="Lumenal" evidence="1">
    <location>
        <begin position="298"/>
        <end position="316"/>
    </location>
</feature>
<feature type="region of interest" description="Disordered" evidence="2">
    <location>
        <begin position="1"/>
        <end position="75"/>
    </location>
</feature>
<feature type="compositionally biased region" description="Basic and acidic residues" evidence="2">
    <location>
        <begin position="7"/>
        <end position="19"/>
    </location>
</feature>
<feature type="compositionally biased region" description="Polar residues" evidence="2">
    <location>
        <begin position="22"/>
        <end position="48"/>
    </location>
</feature>
<feature type="compositionally biased region" description="Polar residues" evidence="2">
    <location>
        <begin position="56"/>
        <end position="65"/>
    </location>
</feature>
<name>GET2_KLULA</name>